<dbReference type="EMBL" id="M80947">
    <property type="status" value="NOT_ANNOTATED_CDS"/>
    <property type="molecule type" value="Genomic_RNA"/>
</dbReference>
<dbReference type="SMR" id="P0C2M0"/>
<dbReference type="GO" id="GO:0042025">
    <property type="term" value="C:host cell nucleus"/>
    <property type="evidence" value="ECO:0007669"/>
    <property type="project" value="UniProtKB-SubCell"/>
</dbReference>
<dbReference type="GO" id="GO:0044423">
    <property type="term" value="C:virion component"/>
    <property type="evidence" value="ECO:0007669"/>
    <property type="project" value="UniProtKB-UniRule"/>
</dbReference>
<dbReference type="GO" id="GO:0039675">
    <property type="term" value="P:exit of virus from host cell nucleus through nuclear pore"/>
    <property type="evidence" value="ECO:0007669"/>
    <property type="project" value="UniProtKB-UniRule"/>
</dbReference>
<dbReference type="Gene3D" id="1.10.287.230">
    <property type="match status" value="1"/>
</dbReference>
<dbReference type="Gene3D" id="1.10.287.10">
    <property type="entry name" value="S15/NS1, RNA-binding"/>
    <property type="match status" value="1"/>
</dbReference>
<dbReference type="HAMAP" id="MF_04067">
    <property type="entry name" value="INFV_NEP"/>
    <property type="match status" value="1"/>
</dbReference>
<dbReference type="InterPro" id="IPR000968">
    <property type="entry name" value="Flu_NS2"/>
</dbReference>
<dbReference type="Pfam" id="PF00601">
    <property type="entry name" value="Flu_NS2"/>
    <property type="match status" value="1"/>
</dbReference>
<dbReference type="SUPFAM" id="SSF101156">
    <property type="entry name" value="Nonstructural protein ns2, Nep, M1-binding domain"/>
    <property type="match status" value="1"/>
</dbReference>
<sequence>MDSNTVSSFQDILMRMSKMQLGSSSEDLNGMITQFESLKLYRDSLGEAVMRMGDLHSLQSRNGKWREQLSQKFEEIRWLIEEVRHRLKVTENSFEQIRFMQALQLLLEVEQEIRTFSFQLI</sequence>
<gene>
    <name evidence="1" type="primary">NS</name>
</gene>
<accession>P0C2M0</accession>
<keyword id="KW-0025">Alternative splicing</keyword>
<keyword id="KW-1048">Host nucleus</keyword>
<keyword id="KW-0945">Host-virus interaction</keyword>
<keyword id="KW-0813">Transport</keyword>
<keyword id="KW-0946">Virion</keyword>
<name>NEP_I82A3</name>
<proteinExistence type="inferred from homology"/>
<protein>
    <recommendedName>
        <fullName evidence="1">Nuclear export protein</fullName>
        <shortName evidence="1">NEP</shortName>
    </recommendedName>
    <alternativeName>
        <fullName evidence="1">Non-structural protein 2</fullName>
        <shortName evidence="1">NS2</shortName>
    </alternativeName>
</protein>
<evidence type="ECO:0000255" key="1">
    <source>
        <dbReference type="HAMAP-Rule" id="MF_04067"/>
    </source>
</evidence>
<comment type="function">
    <text evidence="1">Mediates the nuclear export of encapsidated genomic RNAs (ribonucleoproteins, RNPs). Acts as an adapter between viral RNPs complexes and the nuclear export machinery of the cell. Possesses no intrinsic RNA-binding activity, but includes a C-terminal M1-binding domain. This domain is believed to allow recognition of RNPs bound to the protein M1. Since protein M1 is not available in large quantities before late stages of infection, such an indirect recognition mechanism probably ensures that genomic RNPs are not exported from the host nucleus until sufficient quantities of viral mRNA and progeny genomic RNA have been synthesized. Furthermore, the RNPs enter the host cytoplasm only when associated with the M1 protein that is necessary to guide them to the plasma membrane. May down-regulate viral RNA synthesis when overproduced.</text>
</comment>
<comment type="subunit">
    <text evidence="1">Interacts with protein M1. May interact with host nucleoporin RAB/HRB and exportin XPO1/CRM1.</text>
</comment>
<comment type="subcellular location">
    <subcellularLocation>
        <location evidence="1">Virion</location>
    </subcellularLocation>
    <subcellularLocation>
        <location evidence="1">Host nucleus</location>
    </subcellularLocation>
</comment>
<comment type="alternative products">
    <event type="alternative splicing"/>
    <isoform>
        <id>P0C2M0-1</id>
        <name>NEP</name>
        <name>NS2</name>
        <sequence type="displayed"/>
    </isoform>
    <isoform>
        <id>Q9YPE8-1</id>
        <name>NS1</name>
        <sequence type="external"/>
    </isoform>
</comment>
<comment type="miscellaneous">
    <text>Average number present in a viral particle is estimated to be 130-200 molecules.</text>
</comment>
<comment type="similarity">
    <text evidence="1">Belongs to the influenza viruses NEP family.</text>
</comment>
<organism>
    <name type="scientific">Influenza A virus (strain A/Seal/Massachusetts/133/1982 H4N5)</name>
    <dbReference type="NCBI Taxonomy" id="387250"/>
    <lineage>
        <taxon>Viruses</taxon>
        <taxon>Riboviria</taxon>
        <taxon>Orthornavirae</taxon>
        <taxon>Negarnaviricota</taxon>
        <taxon>Polyploviricotina</taxon>
        <taxon>Insthoviricetes</taxon>
        <taxon>Articulavirales</taxon>
        <taxon>Orthomyxoviridae</taxon>
        <taxon>Alphainfluenzavirus</taxon>
        <taxon>Alphainfluenzavirus influenzae</taxon>
        <taxon>Influenza A virus</taxon>
    </lineage>
</organism>
<feature type="chain" id="PRO_0000281022" description="Nuclear export protein">
    <location>
        <begin position="1"/>
        <end position="121"/>
    </location>
</feature>
<feature type="short sequence motif" description="Nuclear export signal" evidence="1">
    <location>
        <begin position="12"/>
        <end position="21"/>
    </location>
</feature>
<feature type="short sequence motif" description="Nuclear export signal" evidence="1">
    <location>
        <begin position="85"/>
        <end position="94"/>
    </location>
</feature>
<reference key="1">
    <citation type="journal article" date="1998" name="Virus Res.">
        <title>Influence of host species on the evolution of the nonstructural (NS) gene of influenza A viruses.</title>
        <authorList>
            <person name="Kawaoka Y."/>
            <person name="Gorman O.T."/>
            <person name="Ito T."/>
            <person name="Wells K."/>
            <person name="Donis R.O."/>
            <person name="Castrucci M.R."/>
            <person name="Donatelli I."/>
            <person name="Webster R.G."/>
        </authorList>
    </citation>
    <scope>NUCLEOTIDE SEQUENCE [GENOMIC RNA]</scope>
</reference>
<organismHost>
    <name type="scientific">Aves</name>
    <dbReference type="NCBI Taxonomy" id="8782"/>
</organismHost>
<organismHost>
    <name type="scientific">Phocidae</name>
    <name type="common">true seals</name>
    <dbReference type="NCBI Taxonomy" id="9709"/>
</organismHost>